<protein>
    <recommendedName>
        <fullName>Apoptotic protease-activating factor 1</fullName>
        <shortName>APAF-1</shortName>
    </recommendedName>
</protein>
<comment type="function">
    <text evidence="1">Oligomeric Apaf-1 mediates the cytochrome c-dependent autocatalytic activation of pro-caspase-9 (Apaf-3), leading to the activation of caspase-3 and apoptosis. This activation requires ATP (By similarity).</text>
</comment>
<comment type="subunit">
    <text evidence="2">Monomer. Oligomerizes to a heptameric ring, known as the apoptosome, upon binding of cytochrome c and dATP. Oligomeric Apaf-1 and pro-caspase-9 bind to each other via their respective NH2-terminal CARD domains and consecutively mature caspase-9 is released from the complex (By similarity). Interacts with UACA. It may also interact with Bcl-XL. Interacts with APIP. Interacts (via CARD and NACHT domains) with NAIP/BIRC1 (via NACHT domain) (By similarity). Interacts with CIAO2A (By similarity).</text>
</comment>
<comment type="subcellular location">
    <subcellularLocation>
        <location evidence="1">Cytoplasm</location>
    </subcellularLocation>
</comment>
<comment type="alternative products">
    <event type="alternative splicing"/>
    <isoform>
        <id>O88879-1</id>
        <name>1</name>
        <name>Apaf-1L</name>
        <sequence type="displayed"/>
    </isoform>
    <isoform>
        <id>O88879-2</id>
        <name>2</name>
        <sequence type="described" ref="VSP_006763"/>
    </isoform>
</comment>
<comment type="tissue specificity">
    <text>Highly expressed in lung and spleen, weakly in brain and kidney and not detectable in liver.</text>
</comment>
<comment type="developmental stage">
    <text>High levels in embryonic brain and liver from 11.5 dpc to 17.5 dpc.</text>
</comment>
<comment type="domain">
    <text evidence="6">The CARD domain mediates interaction with APIP.</text>
</comment>
<comment type="domain">
    <text evidence="6">The monomeric form is autoinhibited in a closed conformation through a bound ADP at the nucleotide binding site. Exchange of ADP for ATP and binding of cytochrome c trigger a large conformational change where the first WD repeat region swings out, allowing the NB-ARC domain to rotate and expose the contact areas for oligomerization.</text>
</comment>
<comment type="miscellaneous">
    <text evidence="1">Physiological concentrations of calcium ions negatively affect the assembly of apoptosome by inhibiting nucleotide exchange in the monomeric form.</text>
</comment>
<comment type="miscellaneous">
    <molecule>Isoform 1</molecule>
    <text>Major isoform.</text>
</comment>
<feature type="chain" id="PRO_0000050845" description="Apoptotic protease-activating factor 1">
    <location>
        <begin position="1"/>
        <end position="1249"/>
    </location>
</feature>
<feature type="domain" description="CARD" evidence="4">
    <location>
        <begin position="1"/>
        <end position="90"/>
    </location>
</feature>
<feature type="domain" description="NB-ARC">
    <location>
        <begin position="106"/>
        <end position="415"/>
    </location>
</feature>
<feature type="repeat" description="WD 1-1" evidence="5 7">
    <location>
        <begin position="613"/>
        <end position="652"/>
    </location>
</feature>
<feature type="repeat" description="WD 1-2" evidence="5 7">
    <location>
        <begin position="655"/>
        <end position="694"/>
    </location>
</feature>
<feature type="repeat" description="WD 1-3" evidence="5 7">
    <location>
        <begin position="697"/>
        <end position="738"/>
    </location>
</feature>
<feature type="repeat" description="WD 1-4" evidence="5 7">
    <location>
        <begin position="741"/>
        <end position="780"/>
    </location>
</feature>
<feature type="repeat" description="WD 1-5" evidence="5 7">
    <location>
        <begin position="796"/>
        <end position="837"/>
    </location>
</feature>
<feature type="repeat" description="WD 1-6" evidence="5 7">
    <location>
        <begin position="838"/>
        <end position="877"/>
    </location>
</feature>
<feature type="repeat" description="WD 1-7" evidence="5 7">
    <location>
        <begin position="880"/>
        <end position="910"/>
    </location>
</feature>
<feature type="repeat" description="WD 2-1" evidence="5 7">
    <location>
        <begin position="922"/>
        <end position="958"/>
    </location>
</feature>
<feature type="repeat" description="WD 2-2" evidence="5 7">
    <location>
        <begin position="959"/>
        <end position="998"/>
    </location>
</feature>
<feature type="repeat" description="WD 2-3" evidence="5 7">
    <location>
        <begin position="1001"/>
        <end position="1040"/>
    </location>
</feature>
<feature type="repeat" description="WD 2-4" evidence="5 7">
    <location>
        <begin position="1042"/>
        <end position="1080"/>
    </location>
</feature>
<feature type="repeat" description="WD 2-5" evidence="5 7">
    <location>
        <begin position="1083"/>
        <end position="1122"/>
    </location>
</feature>
<feature type="repeat" description="WD 2-6" evidence="5 7">
    <location>
        <begin position="1125"/>
        <end position="1164"/>
    </location>
</feature>
<feature type="repeat" description="WD 2-7" evidence="5 7">
    <location>
        <begin position="1176"/>
        <end position="1213"/>
    </location>
</feature>
<feature type="repeat" description="WD 2-8" evidence="5 7">
    <location>
        <begin position="1214"/>
        <end position="1249"/>
    </location>
</feature>
<feature type="region of interest" description="Interpropeller linker">
    <location>
        <begin position="910"/>
        <end position="921"/>
    </location>
</feature>
<feature type="binding site" evidence="3">
    <location>
        <begin position="154"/>
        <end position="161"/>
    </location>
    <ligand>
        <name>ATP</name>
        <dbReference type="ChEBI" id="CHEBI:30616"/>
    </ligand>
</feature>
<feature type="binding site">
    <location>
        <position position="265"/>
    </location>
    <ligand>
        <name>ATP</name>
        <dbReference type="ChEBI" id="CHEBI:30616"/>
    </ligand>
</feature>
<feature type="splice variant" id="VSP_006763" description="In isoform 2." evidence="8">
    <original>GKDTDGGITSFV</original>
    <variation>A</variation>
    <location>
        <begin position="99"/>
        <end position="110"/>
    </location>
</feature>
<feature type="mutagenesis site" description="No stimulation of CASP9 activity." evidence="7">
    <original>R</original>
    <variation>S</variation>
    <location>
        <position position="265"/>
    </location>
</feature>
<feature type="sequence conflict" description="In Ref. 1; AAC62458." evidence="9" ref="1">
    <original>E</original>
    <variation>D</variation>
    <location>
        <position position="209"/>
    </location>
</feature>
<feature type="sequence conflict" description="In Ref. 1; AAC62458." evidence="9" ref="1">
    <original>R</original>
    <variation>P</variation>
    <location>
        <position position="592"/>
    </location>
</feature>
<feature type="sequence conflict" description="In Ref. 1; AAC62458." evidence="9" ref="1">
    <original>K</original>
    <variation>S</variation>
    <location>
        <position position="710"/>
    </location>
</feature>
<feature type="helix" evidence="10">
    <location>
        <begin position="109"/>
        <end position="116"/>
    </location>
</feature>
<feature type="helix" evidence="10">
    <location>
        <begin position="130"/>
        <end position="141"/>
    </location>
</feature>
<feature type="turn" evidence="10">
    <location>
        <begin position="142"/>
        <end position="145"/>
    </location>
</feature>
<feature type="strand" evidence="10">
    <location>
        <begin position="148"/>
        <end position="153"/>
    </location>
</feature>
<feature type="helix" evidence="10">
    <location>
        <begin position="160"/>
        <end position="167"/>
    </location>
</feature>
<feature type="helix" evidence="10">
    <location>
        <begin position="171"/>
        <end position="174"/>
    </location>
</feature>
<feature type="turn" evidence="10">
    <location>
        <begin position="175"/>
        <end position="177"/>
    </location>
</feature>
<feature type="strand" evidence="10">
    <location>
        <begin position="182"/>
        <end position="186"/>
    </location>
</feature>
<feature type="helix" evidence="10">
    <location>
        <begin position="192"/>
        <end position="206"/>
    </location>
</feature>
<feature type="turn" evidence="10">
    <location>
        <begin position="207"/>
        <end position="209"/>
    </location>
</feature>
<feature type="helix" evidence="10">
    <location>
        <begin position="220"/>
        <end position="230"/>
    </location>
</feature>
<feature type="strand" evidence="10">
    <location>
        <begin position="232"/>
        <end position="235"/>
    </location>
</feature>
<feature type="strand" evidence="10">
    <location>
        <begin position="239"/>
        <end position="244"/>
    </location>
</feature>
<feature type="helix" evidence="10">
    <location>
        <begin position="248"/>
        <end position="251"/>
    </location>
</feature>
<feature type="strand" evidence="10">
    <location>
        <begin position="259"/>
        <end position="266"/>
    </location>
</feature>
<feature type="turn" evidence="10">
    <location>
        <begin position="267"/>
        <end position="272"/>
    </location>
</feature>
<feature type="helix" evidence="10">
    <location>
        <begin position="288"/>
        <end position="299"/>
    </location>
</feature>
<feature type="helix" evidence="10">
    <location>
        <begin position="309"/>
        <end position="316"/>
    </location>
</feature>
<feature type="turn" evidence="10">
    <location>
        <begin position="317"/>
        <end position="319"/>
    </location>
</feature>
<feature type="helix" evidence="10">
    <location>
        <begin position="321"/>
        <end position="333"/>
    </location>
</feature>
<feature type="strand" evidence="10">
    <location>
        <begin position="334"/>
        <end position="336"/>
    </location>
</feature>
<feature type="helix" evidence="10">
    <location>
        <begin position="338"/>
        <end position="346"/>
    </location>
</feature>
<feature type="helix" evidence="10">
    <location>
        <begin position="361"/>
        <end position="373"/>
    </location>
</feature>
<feature type="turn" evidence="10">
    <location>
        <begin position="377"/>
        <end position="379"/>
    </location>
</feature>
<feature type="helix" evidence="10">
    <location>
        <begin position="380"/>
        <end position="385"/>
    </location>
</feature>
<feature type="helix" evidence="10">
    <location>
        <begin position="386"/>
        <end position="388"/>
    </location>
</feature>
<feature type="helix" evidence="10">
    <location>
        <begin position="397"/>
        <end position="404"/>
    </location>
</feature>
<feature type="helix" evidence="10">
    <location>
        <begin position="408"/>
        <end position="420"/>
    </location>
</feature>
<feature type="strand" evidence="10">
    <location>
        <begin position="425"/>
        <end position="436"/>
    </location>
</feature>
<feature type="helix" evidence="10">
    <location>
        <begin position="439"/>
        <end position="448"/>
    </location>
</feature>
<feature type="helix" evidence="10">
    <location>
        <begin position="450"/>
        <end position="452"/>
    </location>
</feature>
<feature type="helix" evidence="10">
    <location>
        <begin position="453"/>
        <end position="465"/>
    </location>
</feature>
<feature type="turn" evidence="10">
    <location>
        <begin position="470"/>
        <end position="472"/>
    </location>
</feature>
<feature type="helix" evidence="10">
    <location>
        <begin position="480"/>
        <end position="493"/>
    </location>
</feature>
<feature type="helix" evidence="10">
    <location>
        <begin position="497"/>
        <end position="504"/>
    </location>
</feature>
<feature type="helix" evidence="10">
    <location>
        <begin position="507"/>
        <end position="517"/>
    </location>
</feature>
<feature type="helix" evidence="10">
    <location>
        <begin position="520"/>
        <end position="528"/>
    </location>
</feature>
<feature type="turn" evidence="10">
    <location>
        <begin position="529"/>
        <end position="532"/>
    </location>
</feature>
<feature type="helix" evidence="10">
    <location>
        <begin position="540"/>
        <end position="552"/>
    </location>
</feature>
<feature type="turn" evidence="10">
    <location>
        <begin position="553"/>
        <end position="556"/>
    </location>
</feature>
<feature type="strand" evidence="10">
    <location>
        <begin position="557"/>
        <end position="559"/>
    </location>
</feature>
<feature type="helix" evidence="10">
    <location>
        <begin position="563"/>
        <end position="568"/>
    </location>
</feature>
<feature type="helix" evidence="10">
    <location>
        <begin position="575"/>
        <end position="585"/>
    </location>
</feature>
<feature type="strand" evidence="10">
    <location>
        <begin position="589"/>
        <end position="591"/>
    </location>
</feature>
<feature type="helix" evidence="10">
    <location>
        <begin position="598"/>
        <end position="600"/>
    </location>
</feature>
<feature type="strand" evidence="10">
    <location>
        <begin position="608"/>
        <end position="611"/>
    </location>
</feature>
<feature type="strand" evidence="10">
    <location>
        <begin position="618"/>
        <end position="623"/>
    </location>
</feature>
<feature type="strand" evidence="10">
    <location>
        <begin position="627"/>
        <end position="634"/>
    </location>
</feature>
<feature type="strand" evidence="10">
    <location>
        <begin position="639"/>
        <end position="643"/>
    </location>
</feature>
<feature type="turn" evidence="10">
    <location>
        <begin position="644"/>
        <end position="646"/>
    </location>
</feature>
<feature type="strand" evidence="10">
    <location>
        <begin position="649"/>
        <end position="653"/>
    </location>
</feature>
<feature type="strand" evidence="10">
    <location>
        <begin position="660"/>
        <end position="665"/>
    </location>
</feature>
<feature type="strand" evidence="10">
    <location>
        <begin position="669"/>
        <end position="676"/>
    </location>
</feature>
<feature type="strand" evidence="10">
    <location>
        <begin position="679"/>
        <end position="685"/>
    </location>
</feature>
<feature type="turn" evidence="10">
    <location>
        <begin position="686"/>
        <end position="688"/>
    </location>
</feature>
<feature type="strand" evidence="10">
    <location>
        <begin position="691"/>
        <end position="696"/>
    </location>
</feature>
<feature type="strand" evidence="10">
    <location>
        <begin position="702"/>
        <end position="707"/>
    </location>
</feature>
<feature type="strand" evidence="10">
    <location>
        <begin position="709"/>
        <end position="712"/>
    </location>
</feature>
<feature type="strand" evidence="10">
    <location>
        <begin position="715"/>
        <end position="720"/>
    </location>
</feature>
<feature type="strand" evidence="10">
    <location>
        <begin position="725"/>
        <end position="729"/>
    </location>
</feature>
<feature type="strand" evidence="10">
    <location>
        <begin position="732"/>
        <end position="739"/>
    </location>
</feature>
<feature type="strand" evidence="10">
    <location>
        <begin position="746"/>
        <end position="751"/>
    </location>
</feature>
<feature type="strand" evidence="10">
    <location>
        <begin position="757"/>
        <end position="771"/>
    </location>
</feature>
<feature type="helix" evidence="10">
    <location>
        <begin position="772"/>
        <end position="774"/>
    </location>
</feature>
<feature type="strand" evidence="10">
    <location>
        <begin position="777"/>
        <end position="782"/>
    </location>
</feature>
<feature type="strand" evidence="10">
    <location>
        <begin position="810"/>
        <end position="817"/>
    </location>
</feature>
<feature type="strand" evidence="10">
    <location>
        <begin position="820"/>
        <end position="825"/>
    </location>
</feature>
<feature type="turn" evidence="10">
    <location>
        <begin position="826"/>
        <end position="828"/>
    </location>
</feature>
<feature type="strand" evidence="10">
    <location>
        <begin position="831"/>
        <end position="836"/>
    </location>
</feature>
<feature type="strand" evidence="10">
    <location>
        <begin position="838"/>
        <end position="841"/>
    </location>
</feature>
<feature type="strand" evidence="10">
    <location>
        <begin position="845"/>
        <end position="848"/>
    </location>
</feature>
<feature type="strand" evidence="10">
    <location>
        <begin position="854"/>
        <end position="858"/>
    </location>
</feature>
<feature type="strand" evidence="10">
    <location>
        <begin position="860"/>
        <end position="862"/>
    </location>
</feature>
<feature type="strand" evidence="10">
    <location>
        <begin position="864"/>
        <end position="868"/>
    </location>
</feature>
<feature type="turn" evidence="10">
    <location>
        <begin position="869"/>
        <end position="872"/>
    </location>
</feature>
<feature type="strand" evidence="10">
    <location>
        <begin position="873"/>
        <end position="878"/>
    </location>
</feature>
<feature type="strand" evidence="10">
    <location>
        <begin position="885"/>
        <end position="890"/>
    </location>
</feature>
<feature type="strand" evidence="10">
    <location>
        <begin position="894"/>
        <end position="901"/>
    </location>
</feature>
<feature type="strand" evidence="10">
    <location>
        <begin position="906"/>
        <end position="910"/>
    </location>
</feature>
<feature type="helix" evidence="10">
    <location>
        <begin position="911"/>
        <end position="915"/>
    </location>
</feature>
<feature type="strand" evidence="10">
    <location>
        <begin position="919"/>
        <end position="931"/>
    </location>
</feature>
<feature type="strand" evidence="10">
    <location>
        <begin position="934"/>
        <end position="953"/>
    </location>
</feature>
<feature type="strand" evidence="10">
    <location>
        <begin position="956"/>
        <end position="959"/>
    </location>
</feature>
<feature type="strand" evidence="10">
    <location>
        <begin position="964"/>
        <end position="969"/>
    </location>
</feature>
<feature type="strand" evidence="10">
    <location>
        <begin position="973"/>
        <end position="980"/>
    </location>
</feature>
<feature type="strand" evidence="10">
    <location>
        <begin position="986"/>
        <end position="989"/>
    </location>
</feature>
<feature type="turn" evidence="10">
    <location>
        <begin position="990"/>
        <end position="992"/>
    </location>
</feature>
<feature type="strand" evidence="10">
    <location>
        <begin position="996"/>
        <end position="998"/>
    </location>
</feature>
<feature type="strand" evidence="10">
    <location>
        <begin position="1009"/>
        <end position="1011"/>
    </location>
</feature>
<feature type="strand" evidence="10">
    <location>
        <begin position="1013"/>
        <end position="1016"/>
    </location>
</feature>
<feature type="strand" evidence="10">
    <location>
        <begin position="1018"/>
        <end position="1021"/>
    </location>
</feature>
<feature type="strand" evidence="10">
    <location>
        <begin position="1023"/>
        <end position="1030"/>
    </location>
</feature>
<feature type="turn" evidence="10">
    <location>
        <begin position="1032"/>
        <end position="1034"/>
    </location>
</feature>
<feature type="strand" evidence="10">
    <location>
        <begin position="1047"/>
        <end position="1052"/>
    </location>
</feature>
<feature type="strand" evidence="10">
    <location>
        <begin position="1054"/>
        <end position="1071"/>
    </location>
</feature>
<feature type="turn" evidence="10">
    <location>
        <begin position="1072"/>
        <end position="1075"/>
    </location>
</feature>
<feature type="strand" evidence="10">
    <location>
        <begin position="1079"/>
        <end position="1082"/>
    </location>
</feature>
<feature type="strand" evidence="10">
    <location>
        <begin position="1091"/>
        <end position="1093"/>
    </location>
</feature>
<feature type="strand" evidence="10">
    <location>
        <begin position="1095"/>
        <end position="1099"/>
    </location>
</feature>
<feature type="strand" evidence="10">
    <location>
        <begin position="1101"/>
        <end position="1103"/>
    </location>
</feature>
<feature type="strand" evidence="10">
    <location>
        <begin position="1114"/>
        <end position="1118"/>
    </location>
</feature>
<feature type="strand" evidence="10">
    <location>
        <begin position="1130"/>
        <end position="1135"/>
    </location>
</feature>
<feature type="strand" evidence="10">
    <location>
        <begin position="1137"/>
        <end position="1146"/>
    </location>
</feature>
<feature type="strand" evidence="10">
    <location>
        <begin position="1153"/>
        <end position="1159"/>
    </location>
</feature>
<feature type="strand" evidence="10">
    <location>
        <begin position="1183"/>
        <end position="1186"/>
    </location>
</feature>
<feature type="strand" evidence="10">
    <location>
        <begin position="1193"/>
        <end position="1203"/>
    </location>
</feature>
<feature type="strand" evidence="10">
    <location>
        <begin position="1205"/>
        <end position="1207"/>
    </location>
</feature>
<feature type="strand" evidence="10">
    <location>
        <begin position="1228"/>
        <end position="1230"/>
    </location>
</feature>
<feature type="strand" evidence="10">
    <location>
        <begin position="1233"/>
        <end position="1236"/>
    </location>
</feature>
<feature type="strand" evidence="10">
    <location>
        <begin position="1242"/>
        <end position="1245"/>
    </location>
</feature>
<gene>
    <name type="primary">Apaf1</name>
</gene>
<proteinExistence type="evidence at protein level"/>
<name>APAF_MOUSE</name>
<reference key="1">
    <citation type="journal article" date="1998" name="Cell">
        <title>Apaf1 (CED-4 homolog) regulates programmed cell death in mammalian development.</title>
        <authorList>
            <person name="Cecconi F."/>
            <person name="Alvarez-Bolado G."/>
            <person name="Meyer B.I."/>
            <person name="Roth K.A."/>
            <person name="Gruss P."/>
        </authorList>
    </citation>
    <scope>NUCLEOTIDE SEQUENCE [MRNA] (ISOFORM 1)</scope>
    <source>
        <strain>Swiss Webster / NIH</strain>
        <tissue>Embryo</tissue>
    </source>
</reference>
<reference key="2">
    <citation type="journal article" date="2000" name="Brain Res.">
        <title>A comparison of the expression and properties of Apaf-1 and Apaf-1L.</title>
        <authorList>
            <person name="Walke D.W."/>
            <person name="Morgan J.I."/>
        </authorList>
    </citation>
    <scope>NUCLEOTIDE SEQUENCE [MRNA] (ISOFORMS 1 AND 2)</scope>
    <source>
        <tissue>Spleen</tissue>
    </source>
</reference>
<reference key="3">
    <citation type="journal article" date="2004" name="Genome Res.">
        <title>The status, quality, and expansion of the NIH full-length cDNA project: the Mammalian Gene Collection (MGC).</title>
        <authorList>
            <consortium name="The MGC Project Team"/>
        </authorList>
    </citation>
    <scope>NUCLEOTIDE SEQUENCE [LARGE SCALE MRNA] (ISOFORM 1)</scope>
</reference>
<reference key="4">
    <citation type="journal article" date="2004" name="J. Biol. Chem.">
        <title>Induced inhibition of ischemic/hypoxic injury by APIP, a novel Apaf-1-interacting protein.</title>
        <authorList>
            <person name="Cho D.-H."/>
            <person name="Hong Y.-M."/>
            <person name="Lee H.-J."/>
            <person name="Woo H.-N."/>
            <person name="Pyo J.-O."/>
            <person name="Mak T.W."/>
            <person name="Jung Y.-K."/>
        </authorList>
    </citation>
    <scope>INTERACTION WITH APIP</scope>
    <scope>DOMAIN</scope>
</reference>
<reference key="5">
    <citation type="journal article" date="2004" name="J. Biol. Chem.">
        <title>Nucling recruits Apaf-1/pro-caspase-9 complex for the induction of stress-induced apoptosis.</title>
        <authorList>
            <person name="Sakai T."/>
            <person name="Liu L."/>
            <person name="Teng X."/>
            <person name="Mukai-Sakai R."/>
            <person name="Shimada H."/>
            <person name="Kaji R."/>
            <person name="Mitani T."/>
            <person name="Matsumoto M."/>
            <person name="Toida K."/>
            <person name="Ishimura K."/>
            <person name="Shishido Y."/>
            <person name="Mak T.W."/>
            <person name="Fukui K."/>
        </authorList>
    </citation>
    <scope>INTERACTION WITH UACA</scope>
</reference>
<reference key="6">
    <citation type="journal article" date="2010" name="Cell">
        <title>A tissue-specific atlas of mouse protein phosphorylation and expression.</title>
        <authorList>
            <person name="Huttlin E.L."/>
            <person name="Jedrychowski M.P."/>
            <person name="Elias J.E."/>
            <person name="Goswami T."/>
            <person name="Rad R."/>
            <person name="Beausoleil S.A."/>
            <person name="Villen J."/>
            <person name="Haas W."/>
            <person name="Sowa M.E."/>
            <person name="Gygi S.P."/>
        </authorList>
    </citation>
    <scope>IDENTIFICATION BY MASS SPECTROMETRY [LARGE SCALE ANALYSIS]</scope>
    <source>
        <tissue>Lung</tissue>
        <tissue>Spleen</tissue>
        <tissue>Testis</tissue>
    </source>
</reference>
<reference key="7">
    <citation type="journal article" date="2011" name="Structure">
        <title>Crystal structure of full-length Apaf-1: how the death signal is relayed in the mitochondrial pathway of apoptosis.</title>
        <authorList>
            <person name="Reubold T.F."/>
            <person name="Wohlgemuth S."/>
            <person name="Eschenburg S."/>
        </authorList>
    </citation>
    <scope>X-RAY CRYSTALLOGRAPHY (3.0 ANGSTROMS)</scope>
    <scope>WD REPEATS</scope>
    <scope>SUBUNIT</scope>
    <scope>MUTAGENESIS OF ARG-265</scope>
</reference>
<evidence type="ECO:0000250" key="1"/>
<evidence type="ECO:0000250" key="2">
    <source>
        <dbReference type="UniProtKB" id="O14727"/>
    </source>
</evidence>
<evidence type="ECO:0000255" key="3"/>
<evidence type="ECO:0000255" key="4">
    <source>
        <dbReference type="PROSITE-ProRule" id="PRU00046"/>
    </source>
</evidence>
<evidence type="ECO:0000255" key="5">
    <source>
        <dbReference type="PROSITE-ProRule" id="PRU00221"/>
    </source>
</evidence>
<evidence type="ECO:0000269" key="6">
    <source>
    </source>
</evidence>
<evidence type="ECO:0000269" key="7">
    <source>
    </source>
</evidence>
<evidence type="ECO:0000303" key="8">
    <source>
    </source>
</evidence>
<evidence type="ECO:0000305" key="9"/>
<evidence type="ECO:0007829" key="10">
    <source>
        <dbReference type="PDB" id="3SFZ"/>
    </source>
</evidence>
<keyword id="KW-0002">3D-structure</keyword>
<keyword id="KW-0025">Alternative splicing</keyword>
<keyword id="KW-0053">Apoptosis</keyword>
<keyword id="KW-0067">ATP-binding</keyword>
<keyword id="KW-0106">Calcium</keyword>
<keyword id="KW-0963">Cytoplasm</keyword>
<keyword id="KW-0547">Nucleotide-binding</keyword>
<keyword id="KW-1185">Reference proteome</keyword>
<keyword id="KW-0677">Repeat</keyword>
<keyword id="KW-0853">WD repeat</keyword>
<organism>
    <name type="scientific">Mus musculus</name>
    <name type="common">Mouse</name>
    <dbReference type="NCBI Taxonomy" id="10090"/>
    <lineage>
        <taxon>Eukaryota</taxon>
        <taxon>Metazoa</taxon>
        <taxon>Chordata</taxon>
        <taxon>Craniata</taxon>
        <taxon>Vertebrata</taxon>
        <taxon>Euteleostomi</taxon>
        <taxon>Mammalia</taxon>
        <taxon>Eutheria</taxon>
        <taxon>Euarchontoglires</taxon>
        <taxon>Glires</taxon>
        <taxon>Rodentia</taxon>
        <taxon>Myomorpha</taxon>
        <taxon>Muroidea</taxon>
        <taxon>Muridae</taxon>
        <taxon>Murinae</taxon>
        <taxon>Mus</taxon>
        <taxon>Mus</taxon>
    </lineage>
</organism>
<accession>O88879</accession>
<accession>A2RRK8</accession>
<dbReference type="EMBL" id="AF064071">
    <property type="protein sequence ID" value="AAC62458.1"/>
    <property type="molecule type" value="mRNA"/>
</dbReference>
<dbReference type="EMBL" id="BC131683">
    <property type="protein sequence ID" value="AAI31684.1"/>
    <property type="molecule type" value="mRNA"/>
</dbReference>
<dbReference type="EMBL" id="BC131684">
    <property type="protein sequence ID" value="AAI31685.1"/>
    <property type="molecule type" value="mRNA"/>
</dbReference>
<dbReference type="CCDS" id="CCDS36030.1">
    <molecule id="O88879-1"/>
</dbReference>
<dbReference type="CCDS" id="CCDS70095.1">
    <molecule id="O88879-2"/>
</dbReference>
<dbReference type="RefSeq" id="NP_001036023.1">
    <molecule id="O88879-1"/>
    <property type="nucleotide sequence ID" value="NM_001042558.2"/>
</dbReference>
<dbReference type="RefSeq" id="NP_033814.2">
    <molecule id="O88879-1"/>
    <property type="nucleotide sequence ID" value="NM_009684.3"/>
</dbReference>
<dbReference type="PDB" id="3SFZ">
    <property type="method" value="X-ray"/>
    <property type="resolution" value="3.00 A"/>
    <property type="chains" value="A=1-1249"/>
</dbReference>
<dbReference type="PDB" id="3SHF">
    <property type="method" value="X-ray"/>
    <property type="resolution" value="3.55 A"/>
    <property type="chains" value="A=1-1249"/>
</dbReference>
<dbReference type="PDBsum" id="3SFZ"/>
<dbReference type="PDBsum" id="3SHF"/>
<dbReference type="SMR" id="O88879"/>
<dbReference type="BioGRID" id="198139">
    <property type="interactions" value="3"/>
</dbReference>
<dbReference type="ComplexPortal" id="CPX-3824">
    <property type="entry name" value="Apoptosome"/>
</dbReference>
<dbReference type="CORUM" id="O88879"/>
<dbReference type="FunCoup" id="O88879">
    <property type="interactions" value="3267"/>
</dbReference>
<dbReference type="IntAct" id="O88879">
    <property type="interactions" value="1"/>
</dbReference>
<dbReference type="STRING" id="10090.ENSMUSP00000020157"/>
<dbReference type="iPTMnet" id="O88879"/>
<dbReference type="PhosphoSitePlus" id="O88879"/>
<dbReference type="PaxDb" id="10090-ENSMUSP00000020157"/>
<dbReference type="PeptideAtlas" id="O88879"/>
<dbReference type="ProteomicsDB" id="281790">
    <molecule id="O88879-1"/>
</dbReference>
<dbReference type="ProteomicsDB" id="281791">
    <molecule id="O88879-2"/>
</dbReference>
<dbReference type="Pumba" id="O88879"/>
<dbReference type="Antibodypedia" id="17738">
    <property type="antibodies" value="721 antibodies from 45 providers"/>
</dbReference>
<dbReference type="DNASU" id="11783"/>
<dbReference type="Ensembl" id="ENSMUST00000020157.13">
    <molecule id="O88879-1"/>
    <property type="protein sequence ID" value="ENSMUSP00000020157.7"/>
    <property type="gene ID" value="ENSMUSG00000019979.13"/>
</dbReference>
<dbReference type="Ensembl" id="ENSMUST00000159110.8">
    <molecule id="O88879-1"/>
    <property type="protein sequence ID" value="ENSMUSP00000125291.2"/>
    <property type="gene ID" value="ENSMUSG00000019979.13"/>
</dbReference>
<dbReference type="GeneID" id="11783"/>
<dbReference type="KEGG" id="mmu:11783"/>
<dbReference type="UCSC" id="uc007gtg.1">
    <molecule id="O88879-1"/>
    <property type="organism name" value="mouse"/>
</dbReference>
<dbReference type="AGR" id="MGI:1306796"/>
<dbReference type="CTD" id="317"/>
<dbReference type="MGI" id="MGI:1306796">
    <property type="gene designation" value="Apaf1"/>
</dbReference>
<dbReference type="VEuPathDB" id="HostDB:ENSMUSG00000019979"/>
<dbReference type="eggNOG" id="KOG4155">
    <property type="taxonomic scope" value="Eukaryota"/>
</dbReference>
<dbReference type="eggNOG" id="KOG4658">
    <property type="taxonomic scope" value="Eukaryota"/>
</dbReference>
<dbReference type="GeneTree" id="ENSGT00940000157710"/>
<dbReference type="InParanoid" id="O88879"/>
<dbReference type="OMA" id="GAYLKWW"/>
<dbReference type="OrthoDB" id="1357022at2759"/>
<dbReference type="PhylomeDB" id="O88879"/>
<dbReference type="TreeFam" id="TF323866"/>
<dbReference type="Reactome" id="R-MMU-111458">
    <property type="pathway name" value="Formation of apoptosome"/>
</dbReference>
<dbReference type="Reactome" id="R-MMU-111459">
    <property type="pathway name" value="Activation of caspases through apoptosome-mediated cleavage"/>
</dbReference>
<dbReference type="Reactome" id="R-MMU-6798695">
    <property type="pathway name" value="Neutrophil degranulation"/>
</dbReference>
<dbReference type="Reactome" id="R-MMU-9627069">
    <property type="pathway name" value="Regulation of the apoptosome activity"/>
</dbReference>
<dbReference type="BioGRID-ORCS" id="11783">
    <property type="hits" value="3 hits in 76 CRISPR screens"/>
</dbReference>
<dbReference type="ChiTaRS" id="Apaf1">
    <property type="organism name" value="mouse"/>
</dbReference>
<dbReference type="EvolutionaryTrace" id="O88879"/>
<dbReference type="PRO" id="PR:O88879"/>
<dbReference type="Proteomes" id="UP000000589">
    <property type="component" value="Chromosome 10"/>
</dbReference>
<dbReference type="RNAct" id="O88879">
    <property type="molecule type" value="protein"/>
</dbReference>
<dbReference type="Bgee" id="ENSMUSG00000019979">
    <property type="expression patterns" value="Expressed in granulocyte and 246 other cell types or tissues"/>
</dbReference>
<dbReference type="ExpressionAtlas" id="O88879">
    <property type="expression patterns" value="baseline and differential"/>
</dbReference>
<dbReference type="GO" id="GO:0043293">
    <property type="term" value="C:apoptosome"/>
    <property type="evidence" value="ECO:0000266"/>
    <property type="project" value="ComplexPortal"/>
</dbReference>
<dbReference type="GO" id="GO:0005829">
    <property type="term" value="C:cytosol"/>
    <property type="evidence" value="ECO:0000314"/>
    <property type="project" value="MGI"/>
</dbReference>
<dbReference type="GO" id="GO:0005634">
    <property type="term" value="C:nucleus"/>
    <property type="evidence" value="ECO:0000314"/>
    <property type="project" value="MGI"/>
</dbReference>
<dbReference type="GO" id="GO:0043531">
    <property type="term" value="F:ADP binding"/>
    <property type="evidence" value="ECO:0007669"/>
    <property type="project" value="InterPro"/>
</dbReference>
<dbReference type="GO" id="GO:0005524">
    <property type="term" value="F:ATP binding"/>
    <property type="evidence" value="ECO:0007669"/>
    <property type="project" value="UniProtKB-KW"/>
</dbReference>
<dbReference type="GO" id="GO:0008656">
    <property type="term" value="F:cysteine-type endopeptidase activator activity involved in apoptotic process"/>
    <property type="evidence" value="ECO:0000314"/>
    <property type="project" value="MGI"/>
</dbReference>
<dbReference type="GO" id="GO:0031072">
    <property type="term" value="F:heat shock protein binding"/>
    <property type="evidence" value="ECO:0007669"/>
    <property type="project" value="Ensembl"/>
</dbReference>
<dbReference type="GO" id="GO:0042802">
    <property type="term" value="F:identical protein binding"/>
    <property type="evidence" value="ECO:0000353"/>
    <property type="project" value="MGI"/>
</dbReference>
<dbReference type="GO" id="GO:0007420">
    <property type="term" value="P:brain development"/>
    <property type="evidence" value="ECO:0000315"/>
    <property type="project" value="MGI"/>
</dbReference>
<dbReference type="GO" id="GO:0010659">
    <property type="term" value="P:cardiac muscle cell apoptotic process"/>
    <property type="evidence" value="ECO:0007669"/>
    <property type="project" value="Ensembl"/>
</dbReference>
<dbReference type="GO" id="GO:0030154">
    <property type="term" value="P:cell differentiation"/>
    <property type="evidence" value="ECO:0007669"/>
    <property type="project" value="Ensembl"/>
</dbReference>
<dbReference type="GO" id="GO:0071560">
    <property type="term" value="P:cellular response to transforming growth factor beta stimulus"/>
    <property type="evidence" value="ECO:0007669"/>
    <property type="project" value="Ensembl"/>
</dbReference>
<dbReference type="GO" id="GO:0030900">
    <property type="term" value="P:forebrain development"/>
    <property type="evidence" value="ECO:0000315"/>
    <property type="project" value="MGI"/>
</dbReference>
<dbReference type="GO" id="GO:0097193">
    <property type="term" value="P:intrinsic apoptotic signaling pathway"/>
    <property type="evidence" value="ECO:0000303"/>
    <property type="project" value="ComplexPortal"/>
</dbReference>
<dbReference type="GO" id="GO:0070059">
    <property type="term" value="P:intrinsic apoptotic signaling pathway in response to endoplasmic reticulum stress"/>
    <property type="evidence" value="ECO:0000315"/>
    <property type="project" value="ParkinsonsUK-UCL"/>
</dbReference>
<dbReference type="GO" id="GO:0001822">
    <property type="term" value="P:kidney development"/>
    <property type="evidence" value="ECO:0007669"/>
    <property type="project" value="Ensembl"/>
</dbReference>
<dbReference type="GO" id="GO:0001843">
    <property type="term" value="P:neural tube closure"/>
    <property type="evidence" value="ECO:0000315"/>
    <property type="project" value="MGI"/>
</dbReference>
<dbReference type="GO" id="GO:0051402">
    <property type="term" value="P:neuron apoptotic process"/>
    <property type="evidence" value="ECO:0000316"/>
    <property type="project" value="MGI"/>
</dbReference>
<dbReference type="GO" id="GO:2001235">
    <property type="term" value="P:positive regulation of apoptotic signaling pathway"/>
    <property type="evidence" value="ECO:0000316"/>
    <property type="project" value="MGI"/>
</dbReference>
<dbReference type="GO" id="GO:1902510">
    <property type="term" value="P:regulation of apoptotic DNA fragmentation"/>
    <property type="evidence" value="ECO:0000316"/>
    <property type="project" value="MGI"/>
</dbReference>
<dbReference type="GO" id="GO:0001666">
    <property type="term" value="P:response to hypoxia"/>
    <property type="evidence" value="ECO:0007669"/>
    <property type="project" value="Ensembl"/>
</dbReference>
<dbReference type="GO" id="GO:0007584">
    <property type="term" value="P:response to nutrient"/>
    <property type="evidence" value="ECO:0007669"/>
    <property type="project" value="Ensembl"/>
</dbReference>
<dbReference type="CDD" id="cd08323">
    <property type="entry name" value="CARD_APAF1"/>
    <property type="match status" value="1"/>
</dbReference>
<dbReference type="CDD" id="cd00200">
    <property type="entry name" value="WD40"/>
    <property type="match status" value="2"/>
</dbReference>
<dbReference type="FunFam" id="1.10.10.10:FF:000204">
    <property type="entry name" value="Apoptotic protease-activating factor 1"/>
    <property type="match status" value="1"/>
</dbReference>
<dbReference type="FunFam" id="1.10.533.10:FF:000014">
    <property type="entry name" value="Apoptotic protease-activating factor 1"/>
    <property type="match status" value="1"/>
</dbReference>
<dbReference type="FunFam" id="1.10.8.430:FF:000001">
    <property type="entry name" value="Apoptotic protease-activating factor 1"/>
    <property type="match status" value="1"/>
</dbReference>
<dbReference type="FunFam" id="1.25.40.370:FF:000001">
    <property type="entry name" value="Apoptotic protease-activating factor 1"/>
    <property type="match status" value="1"/>
</dbReference>
<dbReference type="FunFam" id="2.130.10.10:FF:000135">
    <property type="entry name" value="Apoptotic protease-activating factor 1"/>
    <property type="match status" value="1"/>
</dbReference>
<dbReference type="FunFam" id="2.130.10.10:FF:000196">
    <property type="entry name" value="Apoptotic protease-activating factor 1"/>
    <property type="match status" value="1"/>
</dbReference>
<dbReference type="FunFam" id="3.40.50.300:FF:000502">
    <property type="entry name" value="Apoptotic protease-activating factor 1"/>
    <property type="match status" value="1"/>
</dbReference>
<dbReference type="Gene3D" id="1.25.40.370">
    <property type="match status" value="1"/>
</dbReference>
<dbReference type="Gene3D" id="1.10.533.10">
    <property type="entry name" value="Death Domain, Fas"/>
    <property type="match status" value="1"/>
</dbReference>
<dbReference type="Gene3D" id="1.10.8.430">
    <property type="entry name" value="Helical domain of apoptotic protease-activating factors"/>
    <property type="match status" value="1"/>
</dbReference>
<dbReference type="Gene3D" id="3.40.50.300">
    <property type="entry name" value="P-loop containing nucleotide triphosphate hydrolases"/>
    <property type="match status" value="1"/>
</dbReference>
<dbReference type="Gene3D" id="1.10.10.10">
    <property type="entry name" value="Winged helix-like DNA-binding domain superfamily/Winged helix DNA-binding domain"/>
    <property type="match status" value="1"/>
</dbReference>
<dbReference type="Gene3D" id="2.130.10.10">
    <property type="entry name" value="YVTN repeat-like/Quinoprotein amine dehydrogenase"/>
    <property type="match status" value="2"/>
</dbReference>
<dbReference type="InterPro" id="IPR017251">
    <property type="entry name" value="Apaf-1"/>
</dbReference>
<dbReference type="InterPro" id="IPR041452">
    <property type="entry name" value="APAF1_C"/>
</dbReference>
<dbReference type="InterPro" id="IPR037963">
    <property type="entry name" value="APAF1_CARD_dom"/>
</dbReference>
<dbReference type="InterPro" id="IPR048975">
    <property type="entry name" value="APAF1_WHD"/>
</dbReference>
<dbReference type="InterPro" id="IPR042197">
    <property type="entry name" value="Apaf_helical"/>
</dbReference>
<dbReference type="InterPro" id="IPR001315">
    <property type="entry name" value="CARD"/>
</dbReference>
<dbReference type="InterPro" id="IPR011029">
    <property type="entry name" value="DEATH-like_dom_sf"/>
</dbReference>
<dbReference type="InterPro" id="IPR020472">
    <property type="entry name" value="G-protein_beta_WD-40_rep"/>
</dbReference>
<dbReference type="InterPro" id="IPR002182">
    <property type="entry name" value="NB-ARC"/>
</dbReference>
<dbReference type="InterPro" id="IPR027417">
    <property type="entry name" value="P-loop_NTPase"/>
</dbReference>
<dbReference type="InterPro" id="IPR015943">
    <property type="entry name" value="WD40/YVTN_repeat-like_dom_sf"/>
</dbReference>
<dbReference type="InterPro" id="IPR019775">
    <property type="entry name" value="WD40_repeat_CS"/>
</dbReference>
<dbReference type="InterPro" id="IPR036322">
    <property type="entry name" value="WD40_repeat_dom_sf"/>
</dbReference>
<dbReference type="InterPro" id="IPR001680">
    <property type="entry name" value="WD40_rpt"/>
</dbReference>
<dbReference type="InterPro" id="IPR036388">
    <property type="entry name" value="WH-like_DNA-bd_sf"/>
</dbReference>
<dbReference type="PANTHER" id="PTHR22845">
    <property type="entry name" value="APOPTOTIC PROTEASE-ACTIVATING FACTOR 1"/>
    <property type="match status" value="1"/>
</dbReference>
<dbReference type="PANTHER" id="PTHR22845:SF5">
    <property type="entry name" value="APOPTOTIC PROTEASE-ACTIVATING FACTOR 1"/>
    <property type="match status" value="1"/>
</dbReference>
<dbReference type="Pfam" id="PF21296">
    <property type="entry name" value="APAF-1-like_WHD"/>
    <property type="match status" value="1"/>
</dbReference>
<dbReference type="Pfam" id="PF17908">
    <property type="entry name" value="APAF1_C"/>
    <property type="match status" value="1"/>
</dbReference>
<dbReference type="Pfam" id="PF00619">
    <property type="entry name" value="CARD"/>
    <property type="match status" value="1"/>
</dbReference>
<dbReference type="Pfam" id="PF00931">
    <property type="entry name" value="NB-ARC"/>
    <property type="match status" value="1"/>
</dbReference>
<dbReference type="Pfam" id="PF00400">
    <property type="entry name" value="WD40"/>
    <property type="match status" value="10"/>
</dbReference>
<dbReference type="PIRSF" id="PIRSF037646">
    <property type="entry name" value="Apop_pept_activating-1"/>
    <property type="match status" value="1"/>
</dbReference>
<dbReference type="PRINTS" id="PR00364">
    <property type="entry name" value="DISEASERSIST"/>
</dbReference>
<dbReference type="PRINTS" id="PR00320">
    <property type="entry name" value="GPROTEINBRPT"/>
</dbReference>
<dbReference type="SMART" id="SM00320">
    <property type="entry name" value="WD40"/>
    <property type="match status" value="13"/>
</dbReference>
<dbReference type="SUPFAM" id="SSF47986">
    <property type="entry name" value="DEATH domain"/>
    <property type="match status" value="1"/>
</dbReference>
<dbReference type="SUPFAM" id="SSF52540">
    <property type="entry name" value="P-loop containing nucleoside triphosphate hydrolases"/>
    <property type="match status" value="1"/>
</dbReference>
<dbReference type="SUPFAM" id="SSF50978">
    <property type="entry name" value="WD40 repeat-like"/>
    <property type="match status" value="2"/>
</dbReference>
<dbReference type="PROSITE" id="PS50209">
    <property type="entry name" value="CARD"/>
    <property type="match status" value="1"/>
</dbReference>
<dbReference type="PROSITE" id="PS00678">
    <property type="entry name" value="WD_REPEATS_1"/>
    <property type="match status" value="4"/>
</dbReference>
<dbReference type="PROSITE" id="PS50082">
    <property type="entry name" value="WD_REPEATS_2"/>
    <property type="match status" value="9"/>
</dbReference>
<dbReference type="PROSITE" id="PS50294">
    <property type="entry name" value="WD_REPEATS_REGION"/>
    <property type="match status" value="1"/>
</dbReference>
<sequence>MDAKARNCLLQHREALEKDIKTSYIMDHMISNGVLSVIEEEKVKSQATQYQRAAALIKMILNKDNCAYISFYNALLHEGYKDLAALLQSGLPLVSSSSGKDTDGGITSFVRTVLCEGGVPQRPVIFVTRKKLVHAIQQKLWKLNGEPGWVTIYGMAGCGKSVLAAEAVRDHSLLEGCFSGGVHWVSIGKQDKSGLLMKLQNLCMRLDQEESFSQRLPLNIEEAKDRLRVLMLRKHPRSLLILDDVWDPWVLKAFDNQCQILLTTRDKSVTDSVMGPKHVVPVESGLGREKGLEILSLFVNMKKEDLPAEAHSIIKECKGSPLVVSLIGALLRDFPNRWAYYLRQLQNKQFKRIRKSSSYDYEALDEAMSISVEMLREDIKDYYTDLSILQKDVKVPTKVLCVLWDLETEEVEDILQEFVNKSLLFCNRNGKSFCYYLHDLQVDFLTEKNRSQLQDLHRKMVTQFQRYYQPHTLSPDQEDCMYWYNFLAYHMASANMHKELCALMFSLDWIKAKTELVGPAHLIHEFVAYRHILDEKDCAVCENFQEFLSLNGHLLGRQPFPNIVQLGLCEPETSEVYRQAKLQAKQEGDTGRLYLEWINKKTIKNLSRLVVRPHTDAVYHACFSQDGQRIASCGADKTLQVFKAETGEKLLDIKAHEDEVLCCAFSSDDSYIATCSADKKVKIWDSATGKLVHTYDEHSEQVNCCHFTNKSNHLLLATGSNDFFLKLWDLNQKECRNTMFGHTNSVNHCRFSPDDELLASCSADGTLRLWDVRSANERKSINVKRFFLSSEDPPEDVEVIVKCCSWSADGDKIIVAAKNKVLLFDIHTSGLLAEIHTGHHSTIQYCDFSPYDHLAVIALSQYCVELWNIDSRLKVADCRGHLSWVHGVMFSPDGSSFLTASDDQTIRVWETKKVCKNSAIVLKQEIDVVFQENETMVLAVDNIRGLQLIAGKTGQIDYLPEAQVSCCCLSPHLEYVAFGDEDGAIKIIELPNNRVFSSGVGHKKAVRHIQFTADGKTLISSSEDSVIQVWNWQTGDYVFLQAHQETVKDFRLLQDSRLLSWSFDGTVKVWNVITGRIERDFTCHQGTVLSCAISSDATKFSSTSADKTAKIWSFDLLSPLHELKGHNGCVRCSAFSLDGILLATGDDNGEIRIWNVSDGQLLHSCAPISVEEGTATHGGWVTDVCFSPDSKTLVSAGGYLKWWNVATGDSSQTFYTNGTNLKKIHVSPDFRTYVTVDNLGILYILQVLE</sequence>